<comment type="function">
    <text evidence="1">DNA-dependent RNA polymerase catalyzes the transcription of DNA into RNA using the four ribonucleoside triphosphates as substrates.</text>
</comment>
<comment type="catalytic activity">
    <reaction evidence="1">
        <text>RNA(n) + a ribonucleoside 5'-triphosphate = RNA(n+1) + diphosphate</text>
        <dbReference type="Rhea" id="RHEA:21248"/>
        <dbReference type="Rhea" id="RHEA-COMP:14527"/>
        <dbReference type="Rhea" id="RHEA-COMP:17342"/>
        <dbReference type="ChEBI" id="CHEBI:33019"/>
        <dbReference type="ChEBI" id="CHEBI:61557"/>
        <dbReference type="ChEBI" id="CHEBI:140395"/>
        <dbReference type="EC" id="2.7.7.6"/>
    </reaction>
</comment>
<comment type="subunit">
    <text evidence="1">In plastids the minimal PEP RNA polymerase catalytic core is composed of four subunits: alpha, beta, beta', and beta''. When a (nuclear-encoded) sigma factor is associated with the core the holoenzyme is formed, which can initiate transcription.</text>
</comment>
<comment type="subcellular location">
    <subcellularLocation>
        <location>Plastid</location>
        <location>Chloroplast</location>
    </subcellularLocation>
</comment>
<comment type="similarity">
    <text evidence="1">Belongs to the RNA polymerase beta chain family.</text>
</comment>
<reference key="1">
    <citation type="journal article" date="2007" name="Mol. Genet. Genomics">
        <title>Chloroplast genomes of the diatoms Phaeodactylum tricornutum and Thalassiosira pseudonana: comparison with other plastid genomes of the red lineage.</title>
        <authorList>
            <person name="Oudot-Le Secq M.-P."/>
            <person name="Grimwood J."/>
            <person name="Shapiro H."/>
            <person name="Armbrust E.V."/>
            <person name="Bowler C."/>
            <person name="Green B.R."/>
        </authorList>
    </citation>
    <scope>NUCLEOTIDE SEQUENCE [LARGE SCALE GENOMIC DNA]</scope>
    <source>
        <strain>CCMP1335 / NEPCC58 / CCAP 1085/12</strain>
    </source>
</reference>
<feature type="chain" id="PRO_0000276600" description="DNA-directed RNA polymerase subunit beta">
    <location>
        <begin position="1"/>
        <end position="1386"/>
    </location>
</feature>
<keyword id="KW-0150">Chloroplast</keyword>
<keyword id="KW-0240">DNA-directed RNA polymerase</keyword>
<keyword id="KW-0548">Nucleotidyltransferase</keyword>
<keyword id="KW-0934">Plastid</keyword>
<keyword id="KW-0804">Transcription</keyword>
<keyword id="KW-0808">Transferase</keyword>
<accession>A0T0R1</accession>
<geneLocation type="chloroplast"/>
<organism>
    <name type="scientific">Thalassiosira pseudonana</name>
    <name type="common">Marine diatom</name>
    <name type="synonym">Cyclotella nana</name>
    <dbReference type="NCBI Taxonomy" id="35128"/>
    <lineage>
        <taxon>Eukaryota</taxon>
        <taxon>Sar</taxon>
        <taxon>Stramenopiles</taxon>
        <taxon>Ochrophyta</taxon>
        <taxon>Bacillariophyta</taxon>
        <taxon>Coscinodiscophyceae</taxon>
        <taxon>Thalassiosirophycidae</taxon>
        <taxon>Thalassiosirales</taxon>
        <taxon>Thalassiosiraceae</taxon>
        <taxon>Thalassiosira</taxon>
    </lineage>
</organism>
<protein>
    <recommendedName>
        <fullName evidence="1">DNA-directed RNA polymerase subunit beta</fullName>
        <ecNumber evidence="1">2.7.7.6</ecNumber>
    </recommendedName>
    <alternativeName>
        <fullName evidence="1">PEP</fullName>
    </alternativeName>
    <alternativeName>
        <fullName evidence="1">Plastid-encoded RNA polymerase subunit beta</fullName>
        <shortName evidence="1">RNA polymerase subunit beta</shortName>
    </alternativeName>
</protein>
<name>RPOB_THAPS</name>
<dbReference type="EC" id="2.7.7.6" evidence="1"/>
<dbReference type="EMBL" id="EF067921">
    <property type="protein sequence ID" value="ABK20746.1"/>
    <property type="molecule type" value="Genomic_DNA"/>
</dbReference>
<dbReference type="RefSeq" id="YP_874523.1">
    <property type="nucleotide sequence ID" value="NC_008589.1"/>
</dbReference>
<dbReference type="SMR" id="A0T0R1"/>
<dbReference type="FunCoup" id="A0T0R1">
    <property type="interactions" value="13"/>
</dbReference>
<dbReference type="STRING" id="35128.A0T0R1"/>
<dbReference type="PaxDb" id="35128-Thapsdraft1267"/>
<dbReference type="GeneID" id="4524729"/>
<dbReference type="eggNOG" id="KOG0214">
    <property type="taxonomic scope" value="Eukaryota"/>
</dbReference>
<dbReference type="InParanoid" id="A0T0R1"/>
<dbReference type="GO" id="GO:0009507">
    <property type="term" value="C:chloroplast"/>
    <property type="evidence" value="ECO:0007669"/>
    <property type="project" value="UniProtKB-SubCell"/>
</dbReference>
<dbReference type="GO" id="GO:0000428">
    <property type="term" value="C:DNA-directed RNA polymerase complex"/>
    <property type="evidence" value="ECO:0007669"/>
    <property type="project" value="UniProtKB-KW"/>
</dbReference>
<dbReference type="GO" id="GO:0005739">
    <property type="term" value="C:mitochondrion"/>
    <property type="evidence" value="ECO:0007669"/>
    <property type="project" value="GOC"/>
</dbReference>
<dbReference type="GO" id="GO:0003677">
    <property type="term" value="F:DNA binding"/>
    <property type="evidence" value="ECO:0007669"/>
    <property type="project" value="UniProtKB-UniRule"/>
</dbReference>
<dbReference type="GO" id="GO:0003899">
    <property type="term" value="F:DNA-directed RNA polymerase activity"/>
    <property type="evidence" value="ECO:0007669"/>
    <property type="project" value="UniProtKB-UniRule"/>
</dbReference>
<dbReference type="GO" id="GO:0032549">
    <property type="term" value="F:ribonucleoside binding"/>
    <property type="evidence" value="ECO:0007669"/>
    <property type="project" value="InterPro"/>
</dbReference>
<dbReference type="GO" id="GO:0006351">
    <property type="term" value="P:DNA-templated transcription"/>
    <property type="evidence" value="ECO:0007669"/>
    <property type="project" value="UniProtKB-UniRule"/>
</dbReference>
<dbReference type="CDD" id="cd00653">
    <property type="entry name" value="RNA_pol_B_RPB2"/>
    <property type="match status" value="1"/>
</dbReference>
<dbReference type="Gene3D" id="2.40.50.100">
    <property type="match status" value="1"/>
</dbReference>
<dbReference type="Gene3D" id="2.40.50.150">
    <property type="match status" value="1"/>
</dbReference>
<dbReference type="Gene3D" id="3.90.1100.10">
    <property type="match status" value="2"/>
</dbReference>
<dbReference type="Gene3D" id="2.30.150.10">
    <property type="entry name" value="DNA-directed RNA polymerase, beta subunit, external 1 domain"/>
    <property type="match status" value="1"/>
</dbReference>
<dbReference type="Gene3D" id="2.40.270.10">
    <property type="entry name" value="DNA-directed RNA polymerase, subunit 2, domain 6"/>
    <property type="match status" value="1"/>
</dbReference>
<dbReference type="Gene3D" id="3.90.1800.10">
    <property type="entry name" value="RNA polymerase alpha subunit dimerisation domain"/>
    <property type="match status" value="1"/>
</dbReference>
<dbReference type="Gene3D" id="3.90.1110.10">
    <property type="entry name" value="RNA polymerase Rpb2, domain 2"/>
    <property type="match status" value="1"/>
</dbReference>
<dbReference type="HAMAP" id="MF_01321">
    <property type="entry name" value="RNApol_bact_RpoB"/>
    <property type="match status" value="1"/>
</dbReference>
<dbReference type="InterPro" id="IPR042107">
    <property type="entry name" value="DNA-dir_RNA_pol_bsu_ext_1_sf"/>
</dbReference>
<dbReference type="InterPro" id="IPR019462">
    <property type="entry name" value="DNA-dir_RNA_pol_bsu_external_1"/>
</dbReference>
<dbReference type="InterPro" id="IPR015712">
    <property type="entry name" value="DNA-dir_RNA_pol_su2"/>
</dbReference>
<dbReference type="InterPro" id="IPR007120">
    <property type="entry name" value="DNA-dir_RNAP_su2_dom"/>
</dbReference>
<dbReference type="InterPro" id="IPR037033">
    <property type="entry name" value="DNA-dir_RNAP_su2_hyb_sf"/>
</dbReference>
<dbReference type="InterPro" id="IPR010243">
    <property type="entry name" value="RNA_pol_bsu_bac"/>
</dbReference>
<dbReference type="InterPro" id="IPR007121">
    <property type="entry name" value="RNA_pol_bsu_CS"/>
</dbReference>
<dbReference type="InterPro" id="IPR007644">
    <property type="entry name" value="RNA_pol_bsu_protrusion"/>
</dbReference>
<dbReference type="InterPro" id="IPR007642">
    <property type="entry name" value="RNA_pol_Rpb2_2"/>
</dbReference>
<dbReference type="InterPro" id="IPR037034">
    <property type="entry name" value="RNA_pol_Rpb2_2_sf"/>
</dbReference>
<dbReference type="InterPro" id="IPR007645">
    <property type="entry name" value="RNA_pol_Rpb2_3"/>
</dbReference>
<dbReference type="InterPro" id="IPR007641">
    <property type="entry name" value="RNA_pol_Rpb2_7"/>
</dbReference>
<dbReference type="InterPro" id="IPR014724">
    <property type="entry name" value="RNA_pol_RPB2_OB-fold"/>
</dbReference>
<dbReference type="NCBIfam" id="NF001616">
    <property type="entry name" value="PRK00405.1"/>
    <property type="match status" value="1"/>
</dbReference>
<dbReference type="PANTHER" id="PTHR20856">
    <property type="entry name" value="DNA-DIRECTED RNA POLYMERASE I SUBUNIT 2"/>
    <property type="match status" value="1"/>
</dbReference>
<dbReference type="Pfam" id="PF04563">
    <property type="entry name" value="RNA_pol_Rpb2_1"/>
    <property type="match status" value="1"/>
</dbReference>
<dbReference type="Pfam" id="PF04561">
    <property type="entry name" value="RNA_pol_Rpb2_2"/>
    <property type="match status" value="1"/>
</dbReference>
<dbReference type="Pfam" id="PF04565">
    <property type="entry name" value="RNA_pol_Rpb2_3"/>
    <property type="match status" value="1"/>
</dbReference>
<dbReference type="Pfam" id="PF10385">
    <property type="entry name" value="RNA_pol_Rpb2_45"/>
    <property type="match status" value="1"/>
</dbReference>
<dbReference type="Pfam" id="PF00562">
    <property type="entry name" value="RNA_pol_Rpb2_6"/>
    <property type="match status" value="1"/>
</dbReference>
<dbReference type="Pfam" id="PF04560">
    <property type="entry name" value="RNA_pol_Rpb2_7"/>
    <property type="match status" value="1"/>
</dbReference>
<dbReference type="SUPFAM" id="SSF64484">
    <property type="entry name" value="beta and beta-prime subunits of DNA dependent RNA-polymerase"/>
    <property type="match status" value="2"/>
</dbReference>
<dbReference type="PROSITE" id="PS01166">
    <property type="entry name" value="RNA_POL_BETA"/>
    <property type="match status" value="1"/>
</dbReference>
<gene>
    <name evidence="1" type="primary">rpoB</name>
</gene>
<sequence>MNYTTALPDFIEMQRVSFCWFIAQGLNEELNTFSRIYDFSQNTEYVLFGQEYSLVKPIYNIVRAKKYTANYSAQLVIPLEVRNKKTNIIKYHSKFPIINLPLMTSSATFVINGCERVIVSQIIRSPGVYFEKNKHQKKNKKIRKLISSEIGKLKSFTPPSEILPTESRLYFLKPTIKKKLISDKKKKIRFIKKEEYWNWKGESLNIYSFKQIKDYEIDFSTSFVEHFKVYNDLFKIRHLSTKIKRIKIFLKWLACNNKFSLPNKKHLIFLLINSFNLLSRTIVKYKILKTRNNENKNDFILNDYNQIKKVYDQVLQESETLLSLNINTQILSFILRDLEKFNQLNNFNFLKLNITPKIKVIIANDKIKSSLYFTNSFKELIKFKYNFTKKEKDKKRNQSQATIFKNKTKYLKTKSKIIQYKDDHLIRDIYKKKYEEKELYTATLIPEYGSWIRFGFQKNTKINISKYPIKNQEDEIIIQLDKVTQKPIIHLLKEMGVTDLEICQNLQNSEFFYFNKPILTNSIHQPNKLLRFNLNKNYYKNISEFSRIFDPSYYRLGKIGRSKLNNRLDINLSKRITTITYEDIFAIIDKLITLSTAKQISDDIDHLKNRRVRSVGELLQNLFRIGFQRLLRKLRSQTNKTYSSQLSSFNIVGATIKEFFGASQLSQYMDQTNPLSSLTHRRRISGLGPGGFDRDRISFAVRDIHPSHYGRICPIETPEGQNVGLIASLTTCARVNESGFLETPFWRVINGKVIKNRNPIYLTADIEDFYKIAPADISTNQENYLTKNLIPVRYKQDFLTVTPSEVDFIAVSPIQVVSVAASLIPFFEHDDANRALMGSNMQRQSVPLLLPQKPIVGTGLENQIALDSGMVINAQRAGIVESVTANKIIILEDSGRHYKYDLQKYQRSNQETCINHRPIVWEGEKVKSGQMLTDGPGIISSELSLGQNVLVAYMPWQGYNFEDAILINERLVYEDIFTSIHIERYEIEIDRTAEMSEQTTNNIPNLSISDVQNLNEDGIVTIGTFVKPGDILVGKIIPKDDSEQLPESKLLRAIFGAKAKGVRDTSFRMPEGEYGRVIETLTFNRRTKLAYKFEKIQIFIAQIRKIQVGDKIAGRHGNKGIISRILPRQDMPFLPDGTPVDIILNPLGVPSRMNVGQLYECLLGLAGHKLNRRFKILPFDEMYGPEVSRILINKKLRQASIENDEAWLFNPYSPGKMVLLDGRTGKEFDNPITVGNAYMLKLIHLVDDKMHSRATGPYSLVTQQPLGGKAQHGGQRFGEMEVWALEGFGASFTLKELLTIKSDDMQGRNETLNSIIKGQPIPTSGVPESFKVLVQELRSIGLDLSTYRIDEFSSNQSYEIELNLIEKYNPLLKTFSHTSNINNISF</sequence>
<proteinExistence type="inferred from homology"/>
<evidence type="ECO:0000255" key="1">
    <source>
        <dbReference type="HAMAP-Rule" id="MF_01321"/>
    </source>
</evidence>